<evidence type="ECO:0000255" key="1">
    <source>
        <dbReference type="HAMAP-Rule" id="MF_00672"/>
    </source>
</evidence>
<dbReference type="EMBL" id="CP000436">
    <property type="protein sequence ID" value="ABI24970.1"/>
    <property type="molecule type" value="Genomic_DNA"/>
</dbReference>
<dbReference type="KEGG" id="hso:HS_0693"/>
<dbReference type="eggNOG" id="COG1295">
    <property type="taxonomic scope" value="Bacteria"/>
</dbReference>
<dbReference type="HOGENOM" id="CLU_032288_0_0_6"/>
<dbReference type="GO" id="GO:0005886">
    <property type="term" value="C:plasma membrane"/>
    <property type="evidence" value="ECO:0007669"/>
    <property type="project" value="UniProtKB-SubCell"/>
</dbReference>
<dbReference type="HAMAP" id="MF_00672">
    <property type="entry name" value="UPF0761"/>
    <property type="match status" value="1"/>
</dbReference>
<dbReference type="InterPro" id="IPR023679">
    <property type="entry name" value="UPF0761_bac"/>
</dbReference>
<dbReference type="InterPro" id="IPR017039">
    <property type="entry name" value="Virul_fac_BrkB"/>
</dbReference>
<dbReference type="NCBIfam" id="NF002457">
    <property type="entry name" value="PRK01637.1"/>
    <property type="match status" value="1"/>
</dbReference>
<dbReference type="NCBIfam" id="TIGR00765">
    <property type="entry name" value="yihY_not_rbn"/>
    <property type="match status" value="1"/>
</dbReference>
<dbReference type="PANTHER" id="PTHR30213">
    <property type="entry name" value="INNER MEMBRANE PROTEIN YHJD"/>
    <property type="match status" value="1"/>
</dbReference>
<dbReference type="PANTHER" id="PTHR30213:SF0">
    <property type="entry name" value="UPF0761 MEMBRANE PROTEIN YIHY"/>
    <property type="match status" value="1"/>
</dbReference>
<dbReference type="Pfam" id="PF03631">
    <property type="entry name" value="Virul_fac_BrkB"/>
    <property type="match status" value="1"/>
</dbReference>
<dbReference type="PIRSF" id="PIRSF035875">
    <property type="entry name" value="RNase_BN"/>
    <property type="match status" value="1"/>
</dbReference>
<sequence>MSNLCRNIKVFFKVFLYRFKQNKLNQAAGYLTYSTTLALVPLIMVFFSVFAAFPVFNEITGELKQFIFTNFAPSTGDAVGEYIDQFVNNSKQMSAVGIISLIVVALMLIHSIDRTLNSIWLDTSVRPAIFSFAIYWLILTLGPIVIATSIGISTYVTKFATYTFEQDFGLSVGIKLLSLMPFFLTWFIFTVLYMVVPNKKVSIIHSAAGALIAAVFFTLGKQAFTWYITTFPSYQLIYGAMATLPIMLLWIQLSWTAVLLGAQLSAVLADIRSLDCGNIQIEKIKEEK</sequence>
<feature type="chain" id="PRO_1000044719" description="UPF0761 membrane protein HS_0693">
    <location>
        <begin position="1"/>
        <end position="288"/>
    </location>
</feature>
<feature type="transmembrane region" description="Helical" evidence="1">
    <location>
        <begin position="36"/>
        <end position="56"/>
    </location>
</feature>
<feature type="transmembrane region" description="Helical" evidence="1">
    <location>
        <begin position="92"/>
        <end position="112"/>
    </location>
</feature>
<feature type="transmembrane region" description="Helical" evidence="1">
    <location>
        <begin position="127"/>
        <end position="147"/>
    </location>
</feature>
<feature type="transmembrane region" description="Helical" evidence="1">
    <location>
        <begin position="176"/>
        <end position="196"/>
    </location>
</feature>
<feature type="transmembrane region" description="Helical" evidence="1">
    <location>
        <begin position="200"/>
        <end position="220"/>
    </location>
</feature>
<feature type="transmembrane region" description="Helical" evidence="1">
    <location>
        <begin position="240"/>
        <end position="260"/>
    </location>
</feature>
<comment type="subcellular location">
    <subcellularLocation>
        <location evidence="1">Cell inner membrane</location>
        <topology evidence="1">Multi-pass membrane protein</topology>
    </subcellularLocation>
</comment>
<comment type="similarity">
    <text evidence="1">Belongs to the UPF0761 family.</text>
</comment>
<gene>
    <name type="ordered locus">HS_0693</name>
</gene>
<name>Y693_HISS1</name>
<organism>
    <name type="scientific">Histophilus somni (strain 129Pt)</name>
    <name type="common">Haemophilus somnus</name>
    <dbReference type="NCBI Taxonomy" id="205914"/>
    <lineage>
        <taxon>Bacteria</taxon>
        <taxon>Pseudomonadati</taxon>
        <taxon>Pseudomonadota</taxon>
        <taxon>Gammaproteobacteria</taxon>
        <taxon>Pasteurellales</taxon>
        <taxon>Pasteurellaceae</taxon>
        <taxon>Histophilus</taxon>
    </lineage>
</organism>
<reference key="1">
    <citation type="journal article" date="2007" name="J. Bacteriol.">
        <title>Complete genome sequence of Haemophilus somnus (Histophilus somni) strain 129Pt and comparison to Haemophilus ducreyi 35000HP and Haemophilus influenzae Rd.</title>
        <authorList>
            <person name="Challacombe J.F."/>
            <person name="Duncan A.J."/>
            <person name="Brettin T.S."/>
            <person name="Bruce D."/>
            <person name="Chertkov O."/>
            <person name="Detter J.C."/>
            <person name="Han C.S."/>
            <person name="Misra M."/>
            <person name="Richardson P."/>
            <person name="Tapia R."/>
            <person name="Thayer N."/>
            <person name="Xie G."/>
            <person name="Inzana T.J."/>
        </authorList>
    </citation>
    <scope>NUCLEOTIDE SEQUENCE [LARGE SCALE GENOMIC DNA]</scope>
    <source>
        <strain>129Pt</strain>
    </source>
</reference>
<accession>Q0I2U0</accession>
<proteinExistence type="inferred from homology"/>
<protein>
    <recommendedName>
        <fullName evidence="1">UPF0761 membrane protein HS_0693</fullName>
    </recommendedName>
</protein>
<keyword id="KW-0997">Cell inner membrane</keyword>
<keyword id="KW-1003">Cell membrane</keyword>
<keyword id="KW-0472">Membrane</keyword>
<keyword id="KW-0812">Transmembrane</keyword>
<keyword id="KW-1133">Transmembrane helix</keyword>